<proteinExistence type="inferred from homology"/>
<name>RL10_METBU</name>
<feature type="chain" id="PRO_1000006787" description="Large ribosomal subunit protein uL10">
    <location>
        <begin position="1"/>
        <end position="337"/>
    </location>
</feature>
<feature type="region of interest" description="Disordered" evidence="2">
    <location>
        <begin position="309"/>
        <end position="337"/>
    </location>
</feature>
<feature type="compositionally biased region" description="Acidic residues" evidence="2">
    <location>
        <begin position="310"/>
        <end position="327"/>
    </location>
</feature>
<keyword id="KW-0687">Ribonucleoprotein</keyword>
<keyword id="KW-0689">Ribosomal protein</keyword>
<keyword id="KW-0694">RNA-binding</keyword>
<keyword id="KW-0699">rRNA-binding</keyword>
<dbReference type="EMBL" id="CP000300">
    <property type="protein sequence ID" value="ABE52828.1"/>
    <property type="molecule type" value="Genomic_DNA"/>
</dbReference>
<dbReference type="RefSeq" id="WP_011499970.1">
    <property type="nucleotide sequence ID" value="NC_007955.1"/>
</dbReference>
<dbReference type="SMR" id="Q12UP8"/>
<dbReference type="STRING" id="259564.Mbur_1947"/>
<dbReference type="GeneID" id="3997848"/>
<dbReference type="KEGG" id="mbu:Mbur_1947"/>
<dbReference type="HOGENOM" id="CLU_053173_0_0_2"/>
<dbReference type="Proteomes" id="UP000001979">
    <property type="component" value="Chromosome"/>
</dbReference>
<dbReference type="GO" id="GO:0022625">
    <property type="term" value="C:cytosolic large ribosomal subunit"/>
    <property type="evidence" value="ECO:0007669"/>
    <property type="project" value="TreeGrafter"/>
</dbReference>
<dbReference type="GO" id="GO:0070180">
    <property type="term" value="F:large ribosomal subunit rRNA binding"/>
    <property type="evidence" value="ECO:0007669"/>
    <property type="project" value="UniProtKB-UniRule"/>
</dbReference>
<dbReference type="GO" id="GO:0003735">
    <property type="term" value="F:structural constituent of ribosome"/>
    <property type="evidence" value="ECO:0007669"/>
    <property type="project" value="TreeGrafter"/>
</dbReference>
<dbReference type="GO" id="GO:0002181">
    <property type="term" value="P:cytoplasmic translation"/>
    <property type="evidence" value="ECO:0007669"/>
    <property type="project" value="TreeGrafter"/>
</dbReference>
<dbReference type="GO" id="GO:0000027">
    <property type="term" value="P:ribosomal large subunit assembly"/>
    <property type="evidence" value="ECO:0007669"/>
    <property type="project" value="TreeGrafter"/>
</dbReference>
<dbReference type="CDD" id="cd05795">
    <property type="entry name" value="Ribosomal_P0_L10e"/>
    <property type="match status" value="1"/>
</dbReference>
<dbReference type="Gene3D" id="3.30.70.1730">
    <property type="match status" value="1"/>
</dbReference>
<dbReference type="Gene3D" id="3.90.105.20">
    <property type="match status" value="1"/>
</dbReference>
<dbReference type="Gene3D" id="6.10.140.760">
    <property type="match status" value="1"/>
</dbReference>
<dbReference type="HAMAP" id="MF_00280">
    <property type="entry name" value="Ribosomal_uL10_arch"/>
    <property type="match status" value="1"/>
</dbReference>
<dbReference type="InterPro" id="IPR050323">
    <property type="entry name" value="Ribosomal_protein_uL10"/>
</dbReference>
<dbReference type="InterPro" id="IPR001790">
    <property type="entry name" value="Ribosomal_uL10"/>
</dbReference>
<dbReference type="InterPro" id="IPR040637">
    <property type="entry name" value="Ribosomal_uL10-like_insert"/>
</dbReference>
<dbReference type="InterPro" id="IPR043164">
    <property type="entry name" value="Ribosomal_uL10-like_insert_sf"/>
</dbReference>
<dbReference type="InterPro" id="IPR043141">
    <property type="entry name" value="Ribosomal_uL10-like_sf"/>
</dbReference>
<dbReference type="InterPro" id="IPR022909">
    <property type="entry name" value="Ribosomal_uL10_arc"/>
</dbReference>
<dbReference type="NCBIfam" id="NF003098">
    <property type="entry name" value="PRK04019.1-5"/>
    <property type="match status" value="1"/>
</dbReference>
<dbReference type="PANTHER" id="PTHR45699">
    <property type="entry name" value="60S ACIDIC RIBOSOMAL PROTEIN P0"/>
    <property type="match status" value="1"/>
</dbReference>
<dbReference type="PANTHER" id="PTHR45699:SF3">
    <property type="entry name" value="LARGE RIBOSOMAL SUBUNIT PROTEIN UL10"/>
    <property type="match status" value="1"/>
</dbReference>
<dbReference type="Pfam" id="PF00466">
    <property type="entry name" value="Ribosomal_L10"/>
    <property type="match status" value="1"/>
</dbReference>
<dbReference type="Pfam" id="PF17777">
    <property type="entry name" value="RL10P_insert"/>
    <property type="match status" value="1"/>
</dbReference>
<dbReference type="SUPFAM" id="SSF160369">
    <property type="entry name" value="Ribosomal protein L10-like"/>
    <property type="match status" value="1"/>
</dbReference>
<sequence length="337" mass="36410">MAELHHSEHIPQWKKDEIEEIKSLIESYPLFGVIGIEGIPAKQLQSMRRDLKDFAVLKVCRNSLTRRALDQSSDDVKKMDDYIDVQTALIFTKQNPFKLYKLLEKSKTPSPIKAGMVATSDIIVEKGPTSFPPGPILGDMQGAGIPAAIDGGKVVIKETKAVAKAGEVVSQKLAAMLTRLEIYPLEVGLDLRAVLEEGSIFTPDVLAIDEEQIFSNFVQAAQQAFNMSVNAAYPTAMNINTLLAKAASDSRNVAVNATVYEPGIMDILLGKAYSKMMAIASAASSNDDALDDELKEALGAASSAVSAVEEVVEEQEEVKEEEEEESDMASGLGALFG</sequence>
<comment type="function">
    <text evidence="1">Forms part of the ribosomal stalk, playing a central role in the interaction of the ribosome with GTP-bound translation factors.</text>
</comment>
<comment type="subunit">
    <text evidence="1">Part of the 50S ribosomal subunit. Forms part of the ribosomal stalk which helps the ribosome interact with GTP-bound translation factors. Forms a heptameric L10(L12)2(L12)2(L12)2 complex, where L10 forms an elongated spine to which the L12 dimers bind in a sequential fashion.</text>
</comment>
<comment type="similarity">
    <text evidence="1">Belongs to the universal ribosomal protein uL10 family.</text>
</comment>
<reference key="1">
    <citation type="journal article" date="2009" name="ISME J.">
        <title>The genome sequence of the psychrophilic archaeon, Methanococcoides burtonii: the role of genome evolution in cold adaptation.</title>
        <authorList>
            <person name="Allen M.A."/>
            <person name="Lauro F.M."/>
            <person name="Williams T.J."/>
            <person name="Burg D."/>
            <person name="Siddiqui K.S."/>
            <person name="De Francisci D."/>
            <person name="Chong K.W."/>
            <person name="Pilak O."/>
            <person name="Chew H.H."/>
            <person name="De Maere M.Z."/>
            <person name="Ting L."/>
            <person name="Katrib M."/>
            <person name="Ng C."/>
            <person name="Sowers K.R."/>
            <person name="Galperin M.Y."/>
            <person name="Anderson I.J."/>
            <person name="Ivanova N."/>
            <person name="Dalin E."/>
            <person name="Martinez M."/>
            <person name="Lapidus A."/>
            <person name="Hauser L."/>
            <person name="Land M."/>
            <person name="Thomas T."/>
            <person name="Cavicchioli R."/>
        </authorList>
    </citation>
    <scope>NUCLEOTIDE SEQUENCE [LARGE SCALE GENOMIC DNA]</scope>
    <source>
        <strain>DSM 6242 / NBRC 107633 / OCM 468 / ACE-M</strain>
    </source>
</reference>
<organism>
    <name type="scientific">Methanococcoides burtonii (strain DSM 6242 / NBRC 107633 / OCM 468 / ACE-M)</name>
    <dbReference type="NCBI Taxonomy" id="259564"/>
    <lineage>
        <taxon>Archaea</taxon>
        <taxon>Methanobacteriati</taxon>
        <taxon>Methanobacteriota</taxon>
        <taxon>Stenosarchaea group</taxon>
        <taxon>Methanomicrobia</taxon>
        <taxon>Methanosarcinales</taxon>
        <taxon>Methanosarcinaceae</taxon>
        <taxon>Methanococcoides</taxon>
    </lineage>
</organism>
<gene>
    <name evidence="1" type="primary">rpl10</name>
    <name evidence="1" type="synonym">rplP0</name>
    <name type="ordered locus">Mbur_1947</name>
</gene>
<accession>Q12UP8</accession>
<protein>
    <recommendedName>
        <fullName evidence="1">Large ribosomal subunit protein uL10</fullName>
    </recommendedName>
    <alternativeName>
        <fullName evidence="3">50S ribosomal protein L10</fullName>
    </alternativeName>
    <alternativeName>
        <fullName evidence="1">Acidic ribosomal protein P0 homolog</fullName>
    </alternativeName>
</protein>
<evidence type="ECO:0000255" key="1">
    <source>
        <dbReference type="HAMAP-Rule" id="MF_00280"/>
    </source>
</evidence>
<evidence type="ECO:0000256" key="2">
    <source>
        <dbReference type="SAM" id="MobiDB-lite"/>
    </source>
</evidence>
<evidence type="ECO:0000305" key="3"/>